<evidence type="ECO:0000255" key="1">
    <source>
        <dbReference type="HAMAP-Rule" id="MF_01431"/>
    </source>
</evidence>
<keyword id="KW-0326">Glycosidase</keyword>
<keyword id="KW-0378">Hydrolase</keyword>
<keyword id="KW-1185">Reference proteome</keyword>
<feature type="chain" id="PRO_1000024397" description="Pyrimidine-specific ribonucleoside hydrolase RihA">
    <location>
        <begin position="1"/>
        <end position="318"/>
    </location>
</feature>
<feature type="active site" evidence="1">
    <location>
        <position position="240"/>
    </location>
</feature>
<gene>
    <name evidence="1" type="primary">rihA</name>
    <name type="ordered locus">Sbal_0660</name>
</gene>
<name>RIHA_SHEB5</name>
<dbReference type="EC" id="3.2.-.-" evidence="1"/>
<dbReference type="EMBL" id="CP000563">
    <property type="protein sequence ID" value="ABN60189.1"/>
    <property type="molecule type" value="Genomic_DNA"/>
</dbReference>
<dbReference type="RefSeq" id="WP_011845798.1">
    <property type="nucleotide sequence ID" value="NC_009052.1"/>
</dbReference>
<dbReference type="SMR" id="A3D0C6"/>
<dbReference type="STRING" id="325240.Sbal_0660"/>
<dbReference type="KEGG" id="sbl:Sbal_0660"/>
<dbReference type="HOGENOM" id="CLU_036838_2_0_6"/>
<dbReference type="OrthoDB" id="9797882at2"/>
<dbReference type="Proteomes" id="UP000001557">
    <property type="component" value="Chromosome"/>
</dbReference>
<dbReference type="GO" id="GO:0005829">
    <property type="term" value="C:cytosol"/>
    <property type="evidence" value="ECO:0007669"/>
    <property type="project" value="TreeGrafter"/>
</dbReference>
<dbReference type="GO" id="GO:0008477">
    <property type="term" value="F:purine nucleosidase activity"/>
    <property type="evidence" value="ECO:0007669"/>
    <property type="project" value="TreeGrafter"/>
</dbReference>
<dbReference type="GO" id="GO:0045437">
    <property type="term" value="F:uridine nucleosidase activity"/>
    <property type="evidence" value="ECO:0007669"/>
    <property type="project" value="InterPro"/>
</dbReference>
<dbReference type="GO" id="GO:0015949">
    <property type="term" value="P:nucleobase-containing small molecule interconversion"/>
    <property type="evidence" value="ECO:0007669"/>
    <property type="project" value="InterPro"/>
</dbReference>
<dbReference type="GO" id="GO:0006152">
    <property type="term" value="P:purine nucleoside catabolic process"/>
    <property type="evidence" value="ECO:0007669"/>
    <property type="project" value="TreeGrafter"/>
</dbReference>
<dbReference type="GO" id="GO:0006206">
    <property type="term" value="P:pyrimidine nucleobase metabolic process"/>
    <property type="evidence" value="ECO:0007669"/>
    <property type="project" value="UniProtKB-UniRule"/>
</dbReference>
<dbReference type="CDD" id="cd02651">
    <property type="entry name" value="nuc_hydro_IU_UC_XIUA"/>
    <property type="match status" value="1"/>
</dbReference>
<dbReference type="FunFam" id="3.90.245.10:FF:000001">
    <property type="entry name" value="Pyrimidine-specific ribonucleoside hydrolase RihA"/>
    <property type="match status" value="1"/>
</dbReference>
<dbReference type="Gene3D" id="3.90.245.10">
    <property type="entry name" value="Ribonucleoside hydrolase-like"/>
    <property type="match status" value="1"/>
</dbReference>
<dbReference type="HAMAP" id="MF_01431">
    <property type="entry name" value="Pyrim_hydro_RihA"/>
    <property type="match status" value="1"/>
</dbReference>
<dbReference type="InterPro" id="IPR015910">
    <property type="entry name" value="I/U_nuclsd_hydro_CS"/>
</dbReference>
<dbReference type="InterPro" id="IPR001910">
    <property type="entry name" value="Inosine/uridine_hydrolase_dom"/>
</dbReference>
<dbReference type="InterPro" id="IPR023186">
    <property type="entry name" value="IUNH"/>
</dbReference>
<dbReference type="InterPro" id="IPR022975">
    <property type="entry name" value="Pyrim_hydro_RihA"/>
</dbReference>
<dbReference type="InterPro" id="IPR036452">
    <property type="entry name" value="Ribo_hydro-like"/>
</dbReference>
<dbReference type="NCBIfam" id="NF007761">
    <property type="entry name" value="PRK10443.1"/>
    <property type="match status" value="1"/>
</dbReference>
<dbReference type="PANTHER" id="PTHR12304">
    <property type="entry name" value="INOSINE-URIDINE PREFERRING NUCLEOSIDE HYDROLASE"/>
    <property type="match status" value="1"/>
</dbReference>
<dbReference type="PANTHER" id="PTHR12304:SF4">
    <property type="entry name" value="URIDINE NUCLEOSIDASE"/>
    <property type="match status" value="1"/>
</dbReference>
<dbReference type="Pfam" id="PF01156">
    <property type="entry name" value="IU_nuc_hydro"/>
    <property type="match status" value="1"/>
</dbReference>
<dbReference type="SUPFAM" id="SSF53590">
    <property type="entry name" value="Nucleoside hydrolase"/>
    <property type="match status" value="1"/>
</dbReference>
<dbReference type="PROSITE" id="PS01247">
    <property type="entry name" value="IUNH"/>
    <property type="match status" value="1"/>
</dbReference>
<proteinExistence type="inferred from homology"/>
<comment type="function">
    <text evidence="1">Hydrolyzes cytidine or uridine to ribose and cytosine or uracil, respectively.</text>
</comment>
<comment type="similarity">
    <text evidence="1">Belongs to the IUNH family. RihA subfamily.</text>
</comment>
<protein>
    <recommendedName>
        <fullName evidence="1">Pyrimidine-specific ribonucleoside hydrolase RihA</fullName>
        <ecNumber evidence="1">3.2.-.-</ecNumber>
    </recommendedName>
    <alternativeName>
        <fullName evidence="1">Cytidine/uridine-specific hydrolase</fullName>
    </alternativeName>
</protein>
<organism>
    <name type="scientific">Shewanella baltica (strain OS155 / ATCC BAA-1091)</name>
    <dbReference type="NCBI Taxonomy" id="325240"/>
    <lineage>
        <taxon>Bacteria</taxon>
        <taxon>Pseudomonadati</taxon>
        <taxon>Pseudomonadota</taxon>
        <taxon>Gammaproteobacteria</taxon>
        <taxon>Alteromonadales</taxon>
        <taxon>Shewanellaceae</taxon>
        <taxon>Shewanella</taxon>
    </lineage>
</organism>
<accession>A3D0C6</accession>
<sequence length="318" mass="34568">MTRHIILDCDPGHDDAIALILALAHPDLVPLAVTTSAGNQTPDKTLNNALRILTLLNRGDIPVAGGATKPLTRELIIADNVHGETGLDGPALPEPSFSPQAITAVELMAQQIRQSTQPVTLVPTGPLTNIALLLASHSELHPKIERIVLMGGAAGVGNWTPAAEFNIFVDPEAADIVFKSGIPITMCGLDVTHQAQIMDEDIERIRAIPNPIAQCVAELLDFFMIYHRDPKWGFIGAPLHDPCTIAWLLKPELFEAQDCWVGIETQSELTLGMTVVDRYQLTGKTANATVLFGLDRLGFVDLLVDSLRVYDPTYLNRR</sequence>
<reference key="1">
    <citation type="submission" date="2007-02" db="EMBL/GenBank/DDBJ databases">
        <title>Complete sequence of chromosome of Shewanella baltica OS155.</title>
        <authorList>
            <consortium name="US DOE Joint Genome Institute"/>
            <person name="Copeland A."/>
            <person name="Lucas S."/>
            <person name="Lapidus A."/>
            <person name="Barry K."/>
            <person name="Detter J.C."/>
            <person name="Glavina del Rio T."/>
            <person name="Hammon N."/>
            <person name="Israni S."/>
            <person name="Dalin E."/>
            <person name="Tice H."/>
            <person name="Pitluck S."/>
            <person name="Sims D.R."/>
            <person name="Brettin T."/>
            <person name="Bruce D."/>
            <person name="Han C."/>
            <person name="Tapia R."/>
            <person name="Brainard J."/>
            <person name="Schmutz J."/>
            <person name="Larimer F."/>
            <person name="Land M."/>
            <person name="Hauser L."/>
            <person name="Kyrpides N."/>
            <person name="Mikhailova N."/>
            <person name="Brettar I."/>
            <person name="Klappenbach J."/>
            <person name="Konstantinidis K."/>
            <person name="Rodrigues J."/>
            <person name="Tiedje J."/>
            <person name="Richardson P."/>
        </authorList>
    </citation>
    <scope>NUCLEOTIDE SEQUENCE [LARGE SCALE GENOMIC DNA]</scope>
    <source>
        <strain>OS155 / ATCC BAA-1091</strain>
    </source>
</reference>